<evidence type="ECO:0000255" key="1">
    <source>
        <dbReference type="HAMAP-Rule" id="MF_01358"/>
    </source>
</evidence>
<dbReference type="EC" id="7.1.1.-" evidence="1"/>
<dbReference type="EMBL" id="AM260525">
    <property type="protein sequence ID" value="CAK01584.1"/>
    <property type="molecule type" value="Genomic_DNA"/>
</dbReference>
<dbReference type="RefSeq" id="WP_012231786.1">
    <property type="nucleotide sequence ID" value="NC_010161.1"/>
</dbReference>
<dbReference type="SMR" id="A9IUP7"/>
<dbReference type="KEGG" id="btr:BT_1214"/>
<dbReference type="eggNOG" id="COG0649">
    <property type="taxonomic scope" value="Bacteria"/>
</dbReference>
<dbReference type="HOGENOM" id="CLU_015134_1_1_5"/>
<dbReference type="Proteomes" id="UP000001592">
    <property type="component" value="Chromosome"/>
</dbReference>
<dbReference type="GO" id="GO:0005886">
    <property type="term" value="C:plasma membrane"/>
    <property type="evidence" value="ECO:0007669"/>
    <property type="project" value="UniProtKB-SubCell"/>
</dbReference>
<dbReference type="GO" id="GO:0051287">
    <property type="term" value="F:NAD binding"/>
    <property type="evidence" value="ECO:0007669"/>
    <property type="project" value="InterPro"/>
</dbReference>
<dbReference type="GO" id="GO:0050136">
    <property type="term" value="F:NADH:ubiquinone reductase (non-electrogenic) activity"/>
    <property type="evidence" value="ECO:0007669"/>
    <property type="project" value="UniProtKB-UniRule"/>
</dbReference>
<dbReference type="GO" id="GO:0048038">
    <property type="term" value="F:quinone binding"/>
    <property type="evidence" value="ECO:0007669"/>
    <property type="project" value="UniProtKB-KW"/>
</dbReference>
<dbReference type="FunFam" id="1.10.645.10:FF:000005">
    <property type="entry name" value="NADH-quinone oxidoreductase subunit D"/>
    <property type="match status" value="1"/>
</dbReference>
<dbReference type="Gene3D" id="1.10.645.10">
    <property type="entry name" value="Cytochrome-c3 Hydrogenase, chain B"/>
    <property type="match status" value="1"/>
</dbReference>
<dbReference type="HAMAP" id="MF_01358">
    <property type="entry name" value="NDH1_NuoD"/>
    <property type="match status" value="1"/>
</dbReference>
<dbReference type="InterPro" id="IPR001135">
    <property type="entry name" value="NADH_Q_OxRdtase_suD"/>
</dbReference>
<dbReference type="InterPro" id="IPR014029">
    <property type="entry name" value="NADH_UbQ_OxRdtase_49kDa_CS"/>
</dbReference>
<dbReference type="InterPro" id="IPR022885">
    <property type="entry name" value="NDH1_su_D/H"/>
</dbReference>
<dbReference type="InterPro" id="IPR029014">
    <property type="entry name" value="NiFe-Hase_large"/>
</dbReference>
<dbReference type="NCBIfam" id="TIGR01962">
    <property type="entry name" value="NuoD"/>
    <property type="match status" value="1"/>
</dbReference>
<dbReference type="NCBIfam" id="NF004739">
    <property type="entry name" value="PRK06075.1"/>
    <property type="match status" value="1"/>
</dbReference>
<dbReference type="PANTHER" id="PTHR11993:SF10">
    <property type="entry name" value="NADH DEHYDROGENASE [UBIQUINONE] IRON-SULFUR PROTEIN 2, MITOCHONDRIAL"/>
    <property type="match status" value="1"/>
</dbReference>
<dbReference type="PANTHER" id="PTHR11993">
    <property type="entry name" value="NADH-UBIQUINONE OXIDOREDUCTASE 49 KDA SUBUNIT"/>
    <property type="match status" value="1"/>
</dbReference>
<dbReference type="Pfam" id="PF00346">
    <property type="entry name" value="Complex1_49kDa"/>
    <property type="match status" value="1"/>
</dbReference>
<dbReference type="SUPFAM" id="SSF56762">
    <property type="entry name" value="HydB/Nqo4-like"/>
    <property type="match status" value="1"/>
</dbReference>
<dbReference type="PROSITE" id="PS00535">
    <property type="entry name" value="COMPLEX1_49K"/>
    <property type="match status" value="1"/>
</dbReference>
<name>NUOD_BART1</name>
<organism>
    <name type="scientific">Bartonella tribocorum (strain CIP 105476 / IBS 506)</name>
    <dbReference type="NCBI Taxonomy" id="382640"/>
    <lineage>
        <taxon>Bacteria</taxon>
        <taxon>Pseudomonadati</taxon>
        <taxon>Pseudomonadota</taxon>
        <taxon>Alphaproteobacteria</taxon>
        <taxon>Hyphomicrobiales</taxon>
        <taxon>Bartonellaceae</taxon>
        <taxon>Bartonella</taxon>
    </lineage>
</organism>
<protein>
    <recommendedName>
        <fullName evidence="1">NADH-quinone oxidoreductase subunit D</fullName>
        <ecNumber evidence="1">7.1.1.-</ecNumber>
    </recommendedName>
    <alternativeName>
        <fullName evidence="1">NADH dehydrogenase I subunit D</fullName>
    </alternativeName>
    <alternativeName>
        <fullName evidence="1">NDH-1 subunit D</fullName>
    </alternativeName>
</protein>
<gene>
    <name evidence="1" type="primary">nuoD</name>
    <name type="ordered locus">BT_1214</name>
</gene>
<reference key="1">
    <citation type="journal article" date="2007" name="Nat. Genet.">
        <title>Genomic analysis of Bartonella identifies type IV secretion systems as host adaptability factors.</title>
        <authorList>
            <person name="Saenz H.L."/>
            <person name="Engel P."/>
            <person name="Stoeckli M.C."/>
            <person name="Lanz C."/>
            <person name="Raddatz G."/>
            <person name="Vayssier-Taussat M."/>
            <person name="Birtles R."/>
            <person name="Schuster S.C."/>
            <person name="Dehio C."/>
        </authorList>
    </citation>
    <scope>NUCLEOTIDE SEQUENCE [LARGE SCALE GENOMIC DNA]</scope>
    <source>
        <strain>CIP 105476 / IBS 506</strain>
    </source>
</reference>
<keyword id="KW-0997">Cell inner membrane</keyword>
<keyword id="KW-1003">Cell membrane</keyword>
<keyword id="KW-0472">Membrane</keyword>
<keyword id="KW-0520">NAD</keyword>
<keyword id="KW-0874">Quinone</keyword>
<keyword id="KW-1278">Translocase</keyword>
<keyword id="KW-0813">Transport</keyword>
<keyword id="KW-0830">Ubiquinone</keyword>
<feature type="chain" id="PRO_0000357774" description="NADH-quinone oxidoreductase subunit D">
    <location>
        <begin position="1"/>
        <end position="396"/>
    </location>
</feature>
<sequence>MAEVNVRNFNINFGPQHPAAHGVLRMVLELDGEVVERVDPHIGLLHRGTEKLMETKTYLQAGPYLDRLDYVAPMNQEHAFVLAIEKLLNIKVPKRGQLIRVLFSEIGRILNHLLNVTTQAMDVGALTPPLWGFEQRERLMIFYERACGARLHANYFRPGGVHQDLPESLVEDIGNFIDPFLVSLEKLDALVTPNRIFKQRNVDIGIVSIDEAWARSFSGVMIRGAGVPWDLRKSQPYECYDEMEFDIPIGKNSDCYDRYLIRMEEMRQSAKIMRQCVERLLGAEKNGPVSSLDRKIVPPKRSEMKSSMEALIHHFKLYTEGFHTPPGEVYVAVEAPKGEFGVYLVSDGTNKPYRVKLRAPGFAHLQAMDFLTRGHMLADATAILGSIDIVFGEVDR</sequence>
<comment type="function">
    <text evidence="1">NDH-1 shuttles electrons from NADH, via FMN and iron-sulfur (Fe-S) centers, to quinones in the respiratory chain. The immediate electron acceptor for the enzyme in this species is believed to be ubiquinone. Couples the redox reaction to proton translocation (for every two electrons transferred, four hydrogen ions are translocated across the cytoplasmic membrane), and thus conserves the redox energy in a proton gradient.</text>
</comment>
<comment type="catalytic activity">
    <reaction evidence="1">
        <text>a quinone + NADH + 5 H(+)(in) = a quinol + NAD(+) + 4 H(+)(out)</text>
        <dbReference type="Rhea" id="RHEA:57888"/>
        <dbReference type="ChEBI" id="CHEBI:15378"/>
        <dbReference type="ChEBI" id="CHEBI:24646"/>
        <dbReference type="ChEBI" id="CHEBI:57540"/>
        <dbReference type="ChEBI" id="CHEBI:57945"/>
        <dbReference type="ChEBI" id="CHEBI:132124"/>
    </reaction>
</comment>
<comment type="subunit">
    <text evidence="1">NDH-1 is composed of 14 different subunits. Subunits NuoB, C, D, E, F, and G constitute the peripheral sector of the complex.</text>
</comment>
<comment type="subcellular location">
    <subcellularLocation>
        <location evidence="1">Cell inner membrane</location>
        <topology evidence="1">Peripheral membrane protein</topology>
        <orientation evidence="1">Cytoplasmic side</orientation>
    </subcellularLocation>
</comment>
<comment type="similarity">
    <text evidence="1">Belongs to the complex I 49 kDa subunit family.</text>
</comment>
<accession>A9IUP7</accession>
<proteinExistence type="inferred from homology"/>